<evidence type="ECO:0000255" key="1">
    <source>
        <dbReference type="HAMAP-Rule" id="MF_00797"/>
    </source>
</evidence>
<reference key="1">
    <citation type="journal article" date="2008" name="J. Bacteriol.">
        <title>Genome sequence of the chemolithoautotrophic bacterium Oligotropha carboxidovorans OM5T.</title>
        <authorList>
            <person name="Paul D."/>
            <person name="Bridges S."/>
            <person name="Burgess S.C."/>
            <person name="Dandass Y."/>
            <person name="Lawrence M.L."/>
        </authorList>
    </citation>
    <scope>NUCLEOTIDE SEQUENCE [LARGE SCALE GENOMIC DNA]</scope>
    <source>
        <strain>ATCC 49405 / DSM 1227 / KCTC 32145 / OM5</strain>
    </source>
</reference>
<reference key="2">
    <citation type="journal article" date="2011" name="J. Bacteriol.">
        <title>Complete genome sequences of the chemolithoautotrophic Oligotropha carboxidovorans strains OM4 and OM5.</title>
        <authorList>
            <person name="Volland S."/>
            <person name="Rachinger M."/>
            <person name="Strittmatter A."/>
            <person name="Daniel R."/>
            <person name="Gottschalk G."/>
            <person name="Meyer O."/>
        </authorList>
    </citation>
    <scope>NUCLEOTIDE SEQUENCE [LARGE SCALE GENOMIC DNA]</scope>
    <source>
        <strain>ATCC 49405 / DSM 1227 / KCTC 32145 / OM5</strain>
    </source>
</reference>
<comment type="similarity">
    <text evidence="1">Belongs to the UPF0335 family.</text>
</comment>
<name>Y5086_AFIC5</name>
<accession>B6JC05</accession>
<accession>F8BX92</accession>
<feature type="chain" id="PRO_1000198480" description="UPF0335 protein OCAR_5086/OCA5_c28780">
    <location>
        <begin position="1"/>
        <end position="89"/>
    </location>
</feature>
<dbReference type="EMBL" id="CP001196">
    <property type="protein sequence ID" value="ACI92221.1"/>
    <property type="molecule type" value="Genomic_DNA"/>
</dbReference>
<dbReference type="EMBL" id="CP002826">
    <property type="protein sequence ID" value="AEI07569.1"/>
    <property type="molecule type" value="Genomic_DNA"/>
</dbReference>
<dbReference type="RefSeq" id="WP_012562251.1">
    <property type="nucleotide sequence ID" value="NC_015684.1"/>
</dbReference>
<dbReference type="SMR" id="B6JC05"/>
<dbReference type="STRING" id="504832.OCA5_c28780"/>
<dbReference type="KEGG" id="oca:OCAR_5086"/>
<dbReference type="KEGG" id="ocg:OCA5_c28780"/>
<dbReference type="PATRIC" id="fig|504832.7.peg.3036"/>
<dbReference type="eggNOG" id="COG3750">
    <property type="taxonomic scope" value="Bacteria"/>
</dbReference>
<dbReference type="HOGENOM" id="CLU_158651_2_0_5"/>
<dbReference type="OrthoDB" id="9813793at2"/>
<dbReference type="Proteomes" id="UP000007730">
    <property type="component" value="Chromosome"/>
</dbReference>
<dbReference type="GO" id="GO:0003677">
    <property type="term" value="F:DNA binding"/>
    <property type="evidence" value="ECO:0007669"/>
    <property type="project" value="InterPro"/>
</dbReference>
<dbReference type="HAMAP" id="MF_00797">
    <property type="entry name" value="UPF0335"/>
    <property type="match status" value="1"/>
</dbReference>
<dbReference type="InterPro" id="IPR018753">
    <property type="entry name" value="GapR-like"/>
</dbReference>
<dbReference type="InterPro" id="IPR046367">
    <property type="entry name" value="GapR-like_DNA-bd"/>
</dbReference>
<dbReference type="NCBIfam" id="NF010247">
    <property type="entry name" value="PRK13694.1"/>
    <property type="match status" value="1"/>
</dbReference>
<dbReference type="Pfam" id="PF10073">
    <property type="entry name" value="GapR_DNA-bd"/>
    <property type="match status" value="1"/>
</dbReference>
<gene>
    <name type="ordered locus">OCAR_5086</name>
    <name type="ordered locus">OCA5_c28780</name>
</gene>
<keyword id="KW-1185">Reference proteome</keyword>
<sequence length="89" mass="10227">MATAAAAKEDVAHRFAKDQLKAIIERIERLEEEKKTISDDIRDVYAEAKGNGFDVKALRTIVRMRKQDANEREEQETILETYMQALGML</sequence>
<proteinExistence type="inferred from homology"/>
<protein>
    <recommendedName>
        <fullName evidence="1">UPF0335 protein OCAR_5086/OCA5_c28780</fullName>
    </recommendedName>
</protein>
<organism>
    <name type="scientific">Afipia carboxidovorans (strain ATCC 49405 / DSM 1227 / KCTC 32145 / OM5)</name>
    <name type="common">Oligotropha carboxidovorans</name>
    <dbReference type="NCBI Taxonomy" id="504832"/>
    <lineage>
        <taxon>Bacteria</taxon>
        <taxon>Pseudomonadati</taxon>
        <taxon>Pseudomonadota</taxon>
        <taxon>Alphaproteobacteria</taxon>
        <taxon>Hyphomicrobiales</taxon>
        <taxon>Nitrobacteraceae</taxon>
        <taxon>Afipia</taxon>
    </lineage>
</organism>